<evidence type="ECO:0000255" key="1">
    <source>
        <dbReference type="HAMAP-Rule" id="MF_03004"/>
    </source>
</evidence>
<evidence type="ECO:0000255" key="2">
    <source>
        <dbReference type="PROSITE-ProRule" id="PRU01185"/>
    </source>
</evidence>
<organism>
    <name type="scientific">Salmo salar</name>
    <name type="common">Atlantic salmon</name>
    <dbReference type="NCBI Taxonomy" id="8030"/>
    <lineage>
        <taxon>Eukaryota</taxon>
        <taxon>Metazoa</taxon>
        <taxon>Chordata</taxon>
        <taxon>Craniata</taxon>
        <taxon>Vertebrata</taxon>
        <taxon>Euteleostomi</taxon>
        <taxon>Actinopterygii</taxon>
        <taxon>Neopterygii</taxon>
        <taxon>Teleostei</taxon>
        <taxon>Protacanthopterygii</taxon>
        <taxon>Salmoniformes</taxon>
        <taxon>Salmonidae</taxon>
        <taxon>Salmoninae</taxon>
        <taxon>Salmo</taxon>
    </lineage>
</organism>
<gene>
    <name type="primary">eif3e</name>
    <name type="synonym">eif3s6</name>
</gene>
<keyword id="KW-0963">Cytoplasm</keyword>
<keyword id="KW-0396">Initiation factor</keyword>
<keyword id="KW-0539">Nucleus</keyword>
<keyword id="KW-0648">Protein biosynthesis</keyword>
<keyword id="KW-1185">Reference proteome</keyword>
<sequence length="445" mass="52120">MAEYDLTTKIAHFLDRHLVFPLLEFLSVKEIYNEKELLHGKLDLLSETNMVDFAMDVHKNLFPEKEIPATLREKRITVVGQLKQLQGETEPIVKMFEDPETTKQMQSTRDGQALFNYLAEKHSFRQEYLDTLYRYAKFQYECGNYSGAAEYLYFFRVLVPATDRNALNSLWGKLASEILMQNWEAAMEDLTRLRETIDNNSVSSPLQSLQQRTWLIHWSLFVFFNHPKGRDNIIELFLYQPQYLNAIQTMCPHILRYLTTAVITNKDVRKRRQVLKDLVKVIQQESYTYKDPITEFVECLYVNFDFDSAQKKLRECESVLVNDFFLVACLEDFIENARLFIFETFCRIHQCISISMLADKLNMTPEEAERWIVNLIRNARLDAKIDSKLGHVVMGNNAVSPYQQVIEKTKSLSFRSQMLAMNIEKKMAHASRNETPNWAGQETGF</sequence>
<reference key="1">
    <citation type="journal article" date="2010" name="BMC Genomics">
        <title>Salmo salar and Esox lucius full-length cDNA sequences reveal changes in evolutionary pressures on a post-tetraploidization genome.</title>
        <authorList>
            <person name="Leong J.S."/>
            <person name="Jantzen S.G."/>
            <person name="von Schalburg K.R."/>
            <person name="Cooper G.A."/>
            <person name="Messmer A.M."/>
            <person name="Liao N.Y."/>
            <person name="Munro S."/>
            <person name="Moore R."/>
            <person name="Holt R.A."/>
            <person name="Jones S.J."/>
            <person name="Davidson W.S."/>
            <person name="Koop B.F."/>
        </authorList>
    </citation>
    <scope>NUCLEOTIDE SEQUENCE [LARGE SCALE MRNA]</scope>
    <source>
        <tissue>White muscle</tissue>
    </source>
</reference>
<dbReference type="EMBL" id="BT043738">
    <property type="protein sequence ID" value="ACH70853.1"/>
    <property type="molecule type" value="mRNA"/>
</dbReference>
<dbReference type="RefSeq" id="NP_001135167.1">
    <property type="nucleotide sequence ID" value="NM_001141695.1"/>
</dbReference>
<dbReference type="SMR" id="B5DGH9"/>
<dbReference type="STRING" id="8030.ENSSSAP00000045349"/>
<dbReference type="PaxDb" id="8030-ENSSSAP00000045349"/>
<dbReference type="Ensembl" id="ENSSSAT00020019459">
    <property type="protein sequence ID" value="ENSSSAP00020018246"/>
    <property type="gene ID" value="ENSSSAG00020007011"/>
</dbReference>
<dbReference type="Ensembl" id="ENSSSAT00070058660">
    <property type="protein sequence ID" value="ENSSSAP00070056187"/>
    <property type="gene ID" value="ENSSSAG00070036556"/>
</dbReference>
<dbReference type="Ensembl" id="ENSSSAT00075012180">
    <property type="protein sequence ID" value="ENSSSAP00075008270"/>
    <property type="gene ID" value="ENSSSAG00075005816"/>
</dbReference>
<dbReference type="GeneID" id="100196666"/>
<dbReference type="KEGG" id="sasa:100196666"/>
<dbReference type="CTD" id="325102"/>
<dbReference type="OMA" id="NCPWILR"/>
<dbReference type="OrthoDB" id="291857at7898"/>
<dbReference type="Proteomes" id="UP000087266">
    <property type="component" value="Chromosome ssa02"/>
</dbReference>
<dbReference type="Bgee" id="ENSSSAG00000046961">
    <property type="expression patterns" value="Expressed in pharyngeal gill and 25 other cell types or tissues"/>
</dbReference>
<dbReference type="GO" id="GO:0016282">
    <property type="term" value="C:eukaryotic 43S preinitiation complex"/>
    <property type="evidence" value="ECO:0007669"/>
    <property type="project" value="UniProtKB-UniRule"/>
</dbReference>
<dbReference type="GO" id="GO:0033290">
    <property type="term" value="C:eukaryotic 48S preinitiation complex"/>
    <property type="evidence" value="ECO:0007669"/>
    <property type="project" value="UniProtKB-UniRule"/>
</dbReference>
<dbReference type="GO" id="GO:0005852">
    <property type="term" value="C:eukaryotic translation initiation factor 3 complex"/>
    <property type="evidence" value="ECO:0000250"/>
    <property type="project" value="UniProtKB"/>
</dbReference>
<dbReference type="GO" id="GO:0071540">
    <property type="term" value="C:eukaryotic translation initiation factor 3 complex, eIF3e"/>
    <property type="evidence" value="ECO:0007669"/>
    <property type="project" value="UniProtKB-UniRule"/>
</dbReference>
<dbReference type="GO" id="GO:0005634">
    <property type="term" value="C:nucleus"/>
    <property type="evidence" value="ECO:0007669"/>
    <property type="project" value="UniProtKB-SubCell"/>
</dbReference>
<dbReference type="GO" id="GO:0003743">
    <property type="term" value="F:translation initiation factor activity"/>
    <property type="evidence" value="ECO:0007669"/>
    <property type="project" value="UniProtKB-UniRule"/>
</dbReference>
<dbReference type="GO" id="GO:0001732">
    <property type="term" value="P:formation of cytoplasmic translation initiation complex"/>
    <property type="evidence" value="ECO:0007669"/>
    <property type="project" value="UniProtKB-UniRule"/>
</dbReference>
<dbReference type="GO" id="GO:0006413">
    <property type="term" value="P:translational initiation"/>
    <property type="evidence" value="ECO:0000250"/>
    <property type="project" value="UniProtKB"/>
</dbReference>
<dbReference type="CDD" id="cd21378">
    <property type="entry name" value="eIF3E"/>
    <property type="match status" value="1"/>
</dbReference>
<dbReference type="HAMAP" id="MF_03004">
    <property type="entry name" value="eIF3e"/>
    <property type="match status" value="1"/>
</dbReference>
<dbReference type="InterPro" id="IPR016650">
    <property type="entry name" value="eIF3e"/>
</dbReference>
<dbReference type="InterPro" id="IPR019010">
    <property type="entry name" value="eIF3e_N"/>
</dbReference>
<dbReference type="InterPro" id="IPR000717">
    <property type="entry name" value="PCI_dom"/>
</dbReference>
<dbReference type="InterPro" id="IPR036390">
    <property type="entry name" value="WH_DNA-bd_sf"/>
</dbReference>
<dbReference type="PANTHER" id="PTHR10317">
    <property type="entry name" value="EUKARYOTIC TRANSLATION INITIATION FACTOR 3 SUBUNIT E"/>
    <property type="match status" value="1"/>
</dbReference>
<dbReference type="Pfam" id="PF09440">
    <property type="entry name" value="eIF3_N"/>
    <property type="match status" value="1"/>
</dbReference>
<dbReference type="Pfam" id="PF21357">
    <property type="entry name" value="EIF3E_C"/>
    <property type="match status" value="1"/>
</dbReference>
<dbReference type="Pfam" id="PF01399">
    <property type="entry name" value="PCI"/>
    <property type="match status" value="1"/>
</dbReference>
<dbReference type="PIRSF" id="PIRSF016255">
    <property type="entry name" value="eIF3e_su6"/>
    <property type="match status" value="1"/>
</dbReference>
<dbReference type="SMART" id="SM01186">
    <property type="entry name" value="eIF3_N"/>
    <property type="match status" value="1"/>
</dbReference>
<dbReference type="SMART" id="SM00088">
    <property type="entry name" value="PINT"/>
    <property type="match status" value="1"/>
</dbReference>
<dbReference type="SUPFAM" id="SSF46785">
    <property type="entry name" value="Winged helix' DNA-binding domain"/>
    <property type="match status" value="1"/>
</dbReference>
<dbReference type="PROSITE" id="PS50250">
    <property type="entry name" value="PCI"/>
    <property type="match status" value="1"/>
</dbReference>
<feature type="chain" id="PRO_0000365956" description="Eukaryotic translation initiation factor 3 subunit E">
    <location>
        <begin position="1"/>
        <end position="445"/>
    </location>
</feature>
<feature type="domain" description="PCI" evidence="2">
    <location>
        <begin position="222"/>
        <end position="399"/>
    </location>
</feature>
<proteinExistence type="evidence at transcript level"/>
<comment type="function">
    <text evidence="1">Component of the eukaryotic translation initiation factor 3 (eIF-3) complex, which is involved in protein synthesis of a specialized repertoire of mRNAs and, together with other initiation factors, stimulates binding of mRNA and methionyl-tRNAi to the 40S ribosome. The eIF-3 complex specifically targets and initiates translation of a subset of mRNAs involved in cell proliferation.</text>
</comment>
<comment type="subunit">
    <text evidence="1">Component of the eukaryotic translation initiation factor 3 (eIF-3) complex, which is composed of 13 subunits: eif3a, eif3b, eif3c, eif3d, eif3e, eif3f, eif3g, eif3h, eif3i, eif3j, eif3k, eif3l and eif3m.</text>
</comment>
<comment type="subcellular location">
    <subcellularLocation>
        <location evidence="1">Cytoplasm</location>
    </subcellularLocation>
    <subcellularLocation>
        <location evidence="1">Nucleus</location>
    </subcellularLocation>
</comment>
<comment type="similarity">
    <text evidence="1">Belongs to the eIF-3 subunit E family.</text>
</comment>
<name>EIF3E_SALSA</name>
<accession>B5DGH9</accession>
<protein>
    <recommendedName>
        <fullName evidence="1">Eukaryotic translation initiation factor 3 subunit E</fullName>
        <shortName evidence="1">eIF3e</shortName>
    </recommendedName>
    <alternativeName>
        <fullName evidence="1">Eukaryotic translation initiation factor 3 subunit 6</fullName>
    </alternativeName>
</protein>